<feature type="chain" id="PRO_1000202217" description="Leucine--tRNA ligase">
    <location>
        <begin position="1"/>
        <end position="863"/>
    </location>
</feature>
<feature type="short sequence motif" description="'HIGH' region">
    <location>
        <begin position="42"/>
        <end position="52"/>
    </location>
</feature>
<feature type="short sequence motif" description="'KMSKS' region">
    <location>
        <begin position="618"/>
        <end position="622"/>
    </location>
</feature>
<feature type="binding site" evidence="1">
    <location>
        <position position="621"/>
    </location>
    <ligand>
        <name>ATP</name>
        <dbReference type="ChEBI" id="CHEBI:30616"/>
    </ligand>
</feature>
<keyword id="KW-0030">Aminoacyl-tRNA synthetase</keyword>
<keyword id="KW-0067">ATP-binding</keyword>
<keyword id="KW-0963">Cytoplasm</keyword>
<keyword id="KW-0436">Ligase</keyword>
<keyword id="KW-0547">Nucleotide-binding</keyword>
<keyword id="KW-0648">Protein biosynthesis</keyword>
<keyword id="KW-1185">Reference proteome</keyword>
<evidence type="ECO:0000255" key="1">
    <source>
        <dbReference type="HAMAP-Rule" id="MF_00049"/>
    </source>
</evidence>
<organism>
    <name type="scientific">Desulforapulum autotrophicum (strain ATCC 43914 / DSM 3382 / VKM B-1955 / HRM2)</name>
    <name type="common">Desulfobacterium autotrophicum</name>
    <dbReference type="NCBI Taxonomy" id="177437"/>
    <lineage>
        <taxon>Bacteria</taxon>
        <taxon>Pseudomonadati</taxon>
        <taxon>Thermodesulfobacteriota</taxon>
        <taxon>Desulfobacteria</taxon>
        <taxon>Desulfobacterales</taxon>
        <taxon>Desulfobacteraceae</taxon>
        <taxon>Desulforapulum</taxon>
    </lineage>
</organism>
<accession>C0QI75</accession>
<comment type="catalytic activity">
    <reaction evidence="1">
        <text>tRNA(Leu) + L-leucine + ATP = L-leucyl-tRNA(Leu) + AMP + diphosphate</text>
        <dbReference type="Rhea" id="RHEA:11688"/>
        <dbReference type="Rhea" id="RHEA-COMP:9613"/>
        <dbReference type="Rhea" id="RHEA-COMP:9622"/>
        <dbReference type="ChEBI" id="CHEBI:30616"/>
        <dbReference type="ChEBI" id="CHEBI:33019"/>
        <dbReference type="ChEBI" id="CHEBI:57427"/>
        <dbReference type="ChEBI" id="CHEBI:78442"/>
        <dbReference type="ChEBI" id="CHEBI:78494"/>
        <dbReference type="ChEBI" id="CHEBI:456215"/>
        <dbReference type="EC" id="6.1.1.4"/>
    </reaction>
</comment>
<comment type="subcellular location">
    <subcellularLocation>
        <location evidence="1">Cytoplasm</location>
    </subcellularLocation>
</comment>
<comment type="similarity">
    <text evidence="1">Belongs to the class-I aminoacyl-tRNA synthetase family.</text>
</comment>
<proteinExistence type="inferred from homology"/>
<name>SYL_DESAH</name>
<protein>
    <recommendedName>
        <fullName evidence="1">Leucine--tRNA ligase</fullName>
        <ecNumber evidence="1">6.1.1.4</ecNumber>
    </recommendedName>
    <alternativeName>
        <fullName evidence="1">Leucyl-tRNA synthetase</fullName>
        <shortName evidence="1">LeuRS</shortName>
    </alternativeName>
</protein>
<dbReference type="EC" id="6.1.1.4" evidence="1"/>
<dbReference type="EMBL" id="CP001087">
    <property type="protein sequence ID" value="ACN15811.1"/>
    <property type="molecule type" value="Genomic_DNA"/>
</dbReference>
<dbReference type="RefSeq" id="WP_015904574.1">
    <property type="nucleotide sequence ID" value="NC_012108.1"/>
</dbReference>
<dbReference type="SMR" id="C0QI75"/>
<dbReference type="STRING" id="177437.HRM2_27190"/>
<dbReference type="KEGG" id="dat:HRM2_27190"/>
<dbReference type="eggNOG" id="COG0495">
    <property type="taxonomic scope" value="Bacteria"/>
</dbReference>
<dbReference type="HOGENOM" id="CLU_004427_0_0_7"/>
<dbReference type="OrthoDB" id="9810365at2"/>
<dbReference type="Proteomes" id="UP000000442">
    <property type="component" value="Chromosome"/>
</dbReference>
<dbReference type="GO" id="GO:0005829">
    <property type="term" value="C:cytosol"/>
    <property type="evidence" value="ECO:0007669"/>
    <property type="project" value="TreeGrafter"/>
</dbReference>
<dbReference type="GO" id="GO:0002161">
    <property type="term" value="F:aminoacyl-tRNA deacylase activity"/>
    <property type="evidence" value="ECO:0007669"/>
    <property type="project" value="InterPro"/>
</dbReference>
<dbReference type="GO" id="GO:0005524">
    <property type="term" value="F:ATP binding"/>
    <property type="evidence" value="ECO:0007669"/>
    <property type="project" value="UniProtKB-UniRule"/>
</dbReference>
<dbReference type="GO" id="GO:0004823">
    <property type="term" value="F:leucine-tRNA ligase activity"/>
    <property type="evidence" value="ECO:0007669"/>
    <property type="project" value="UniProtKB-UniRule"/>
</dbReference>
<dbReference type="GO" id="GO:0006429">
    <property type="term" value="P:leucyl-tRNA aminoacylation"/>
    <property type="evidence" value="ECO:0007669"/>
    <property type="project" value="UniProtKB-UniRule"/>
</dbReference>
<dbReference type="CDD" id="cd07958">
    <property type="entry name" value="Anticodon_Ia_Leu_BEm"/>
    <property type="match status" value="1"/>
</dbReference>
<dbReference type="CDD" id="cd00812">
    <property type="entry name" value="LeuRS_core"/>
    <property type="match status" value="1"/>
</dbReference>
<dbReference type="FunFam" id="3.40.50.620:FF:000003">
    <property type="entry name" value="Leucine--tRNA ligase"/>
    <property type="match status" value="1"/>
</dbReference>
<dbReference type="FunFam" id="3.40.50.620:FF:000056">
    <property type="entry name" value="Leucine--tRNA ligase"/>
    <property type="match status" value="1"/>
</dbReference>
<dbReference type="FunFam" id="1.10.730.10:FF:000011">
    <property type="entry name" value="Leucine--tRNA ligase chloroplastic/mitochondrial"/>
    <property type="match status" value="1"/>
</dbReference>
<dbReference type="Gene3D" id="3.40.50.620">
    <property type="entry name" value="HUPs"/>
    <property type="match status" value="2"/>
</dbReference>
<dbReference type="Gene3D" id="1.10.730.10">
    <property type="entry name" value="Isoleucyl-tRNA Synthetase, Domain 1"/>
    <property type="match status" value="1"/>
</dbReference>
<dbReference type="Gene3D" id="3.90.740.10">
    <property type="entry name" value="Valyl/Leucyl/Isoleucyl-tRNA synthetase, editing domain"/>
    <property type="match status" value="1"/>
</dbReference>
<dbReference type="HAMAP" id="MF_00049_B">
    <property type="entry name" value="Leu_tRNA_synth_B"/>
    <property type="match status" value="1"/>
</dbReference>
<dbReference type="InterPro" id="IPR001412">
    <property type="entry name" value="aa-tRNA-synth_I_CS"/>
</dbReference>
<dbReference type="InterPro" id="IPR002300">
    <property type="entry name" value="aa-tRNA-synth_Ia"/>
</dbReference>
<dbReference type="InterPro" id="IPR002302">
    <property type="entry name" value="Leu-tRNA-ligase"/>
</dbReference>
<dbReference type="InterPro" id="IPR025709">
    <property type="entry name" value="Leu_tRNA-synth_edit"/>
</dbReference>
<dbReference type="InterPro" id="IPR013155">
    <property type="entry name" value="M/V/L/I-tRNA-synth_anticd-bd"/>
</dbReference>
<dbReference type="InterPro" id="IPR015413">
    <property type="entry name" value="Methionyl/Leucyl_tRNA_Synth"/>
</dbReference>
<dbReference type="InterPro" id="IPR014729">
    <property type="entry name" value="Rossmann-like_a/b/a_fold"/>
</dbReference>
<dbReference type="InterPro" id="IPR009080">
    <property type="entry name" value="tRNAsynth_Ia_anticodon-bd"/>
</dbReference>
<dbReference type="InterPro" id="IPR009008">
    <property type="entry name" value="Val/Leu/Ile-tRNA-synth_edit"/>
</dbReference>
<dbReference type="NCBIfam" id="TIGR00396">
    <property type="entry name" value="leuS_bact"/>
    <property type="match status" value="1"/>
</dbReference>
<dbReference type="PANTHER" id="PTHR43740:SF2">
    <property type="entry name" value="LEUCINE--TRNA LIGASE, MITOCHONDRIAL"/>
    <property type="match status" value="1"/>
</dbReference>
<dbReference type="PANTHER" id="PTHR43740">
    <property type="entry name" value="LEUCYL-TRNA SYNTHETASE"/>
    <property type="match status" value="1"/>
</dbReference>
<dbReference type="Pfam" id="PF08264">
    <property type="entry name" value="Anticodon_1"/>
    <property type="match status" value="1"/>
</dbReference>
<dbReference type="Pfam" id="PF00133">
    <property type="entry name" value="tRNA-synt_1"/>
    <property type="match status" value="2"/>
</dbReference>
<dbReference type="Pfam" id="PF13603">
    <property type="entry name" value="tRNA-synt_1_2"/>
    <property type="match status" value="1"/>
</dbReference>
<dbReference type="Pfam" id="PF09334">
    <property type="entry name" value="tRNA-synt_1g"/>
    <property type="match status" value="1"/>
</dbReference>
<dbReference type="PRINTS" id="PR00985">
    <property type="entry name" value="TRNASYNTHLEU"/>
</dbReference>
<dbReference type="SUPFAM" id="SSF47323">
    <property type="entry name" value="Anticodon-binding domain of a subclass of class I aminoacyl-tRNA synthetases"/>
    <property type="match status" value="1"/>
</dbReference>
<dbReference type="SUPFAM" id="SSF52374">
    <property type="entry name" value="Nucleotidylyl transferase"/>
    <property type="match status" value="1"/>
</dbReference>
<dbReference type="SUPFAM" id="SSF50677">
    <property type="entry name" value="ValRS/IleRS/LeuRS editing domain"/>
    <property type="match status" value="1"/>
</dbReference>
<dbReference type="PROSITE" id="PS00178">
    <property type="entry name" value="AA_TRNA_LIGASE_I"/>
    <property type="match status" value="1"/>
</dbReference>
<gene>
    <name evidence="1" type="primary">leuS</name>
    <name type="ordered locus">HRM2_27190</name>
</gene>
<sequence length="863" mass="98680">MEERYNPEKVEPLWQAYWNQHQTFKATEDGSKPKYYLLEMFPYPSGKIHMGHVRNYTIGDVVVRYKRMKGFNVLHPMGWDAFGMPAENAAIDNNTHPAAWTYENIRTMRRQLKRMGFSYDWDREIATCRPEYYRWEQWLFLKMLDKDMVYRKESYVNWCDHCQTVLANEQVEQDMCWRCGKPVQQKKLWQWFFRITDFAEDLLVHCDKLPGWPDNVTLMQKNWIGKSQGSEIRFPIQGIDENIPVFTTRPDTLFGSTFMCLAPEHPLVETLSRGTDQAAAVTEFTTRVLNQERSSIALEKYEKEGVFTGAWCINPVTREKMPIYTANFALMEYGTGAVMSVPAHDQRDFDFARKYGLPIKVVIQPPGEPLDPATMIEAYTGQGTLADSGEFSGLGNLEAMGAITRWLENKGLGKTTVSFRLRDWGISRQRYWGTPIPVIHCPDCGIVPVKEETLPVVLPEDAALLDNGGSPLATLDGFARVNCPVCNRADARRETDTMDTFVESSWYFARYCSPRYDKGMFDPAAVAYWMPVDQYIGGVEHAILHLLYSRYFMRVLNTLGLIDFKEPFERLLTQGMVCKETLTCPEHGFIYPDDAETVNDKVICKRCNSDVEVGRVIKMSKSKKNVIDPNALLDQYGADITRLFCLFAAPPEKDLEWNDDGVEGCNRFINRVWRLADRCKSTYIDLLPYSGVVADLKGEPKKLFIKANQTIKKVTDDIEESFHFNTAISAVMELVNAMYSADLDPDQTDMGEVALFCIENIVLLLSPIVPHFCEELWSILGHGPSIVDQPWPDYQKDALLTDEILIVVQVNGKLRSKFSVDAAVSDDFIRKAALADEQVEKYIKGKTIKKVIVVKKKLVNIVV</sequence>
<reference key="1">
    <citation type="journal article" date="2009" name="Environ. Microbiol.">
        <title>Genome sequence of Desulfobacterium autotrophicum HRM2, a marine sulfate reducer oxidizing organic carbon completely to carbon dioxide.</title>
        <authorList>
            <person name="Strittmatter A.W."/>
            <person name="Liesegang H."/>
            <person name="Rabus R."/>
            <person name="Decker I."/>
            <person name="Amann J."/>
            <person name="Andres S."/>
            <person name="Henne A."/>
            <person name="Fricke W.F."/>
            <person name="Martinez-Arias R."/>
            <person name="Bartels D."/>
            <person name="Goesmann A."/>
            <person name="Krause L."/>
            <person name="Puehler A."/>
            <person name="Klenk H.P."/>
            <person name="Richter M."/>
            <person name="Schuler M."/>
            <person name="Gloeckner F.O."/>
            <person name="Meyerdierks A."/>
            <person name="Gottschalk G."/>
            <person name="Amann R."/>
        </authorList>
    </citation>
    <scope>NUCLEOTIDE SEQUENCE [LARGE SCALE GENOMIC DNA]</scope>
    <source>
        <strain>ATCC 43914 / DSM 3382 / VKM B-1955 / HRM2</strain>
    </source>
</reference>